<accession>P43132</accession>
<accession>D6VY17</accession>
<accession>E9PA88</accession>
<organism>
    <name type="scientific">Saccharomyces cerevisiae (strain ATCC 204508 / S288c)</name>
    <name type="common">Baker's yeast</name>
    <dbReference type="NCBI Taxonomy" id="559292"/>
    <lineage>
        <taxon>Eukaryota</taxon>
        <taxon>Fungi</taxon>
        <taxon>Dikarya</taxon>
        <taxon>Ascomycota</taxon>
        <taxon>Saccharomycotina</taxon>
        <taxon>Saccharomycetes</taxon>
        <taxon>Saccharomycetales</taxon>
        <taxon>Saccharomycetaceae</taxon>
        <taxon>Saccharomyces</taxon>
    </lineage>
</organism>
<evidence type="ECO:0000255" key="1">
    <source>
        <dbReference type="PROSITE-ProRule" id="PRU00548"/>
    </source>
</evidence>
<evidence type="ECO:0000256" key="2">
    <source>
        <dbReference type="SAM" id="MobiDB-lite"/>
    </source>
</evidence>
<evidence type="ECO:0000269" key="3">
    <source>
    </source>
</evidence>
<evidence type="ECO:0000269" key="4">
    <source>
    </source>
</evidence>
<evidence type="ECO:0000269" key="5">
    <source>
    </source>
</evidence>
<evidence type="ECO:0000269" key="6">
    <source>
    </source>
</evidence>
<evidence type="ECO:0000269" key="7">
    <source>
    </source>
</evidence>
<evidence type="ECO:0000269" key="8">
    <source>
    </source>
</evidence>
<evidence type="ECO:0000269" key="9">
    <source>
    </source>
</evidence>
<evidence type="ECO:0000269" key="10">
    <source>
    </source>
</evidence>
<evidence type="ECO:0000269" key="11">
    <source>
    </source>
</evidence>
<evidence type="ECO:0000303" key="12">
    <source>
    </source>
</evidence>
<evidence type="ECO:0000303" key="13">
    <source>
    </source>
</evidence>
<evidence type="ECO:0000303" key="14">
    <source>
    </source>
</evidence>
<evidence type="ECO:0000303" key="15">
    <source>
    </source>
</evidence>
<evidence type="ECO:0000305" key="16"/>
<evidence type="ECO:0007744" key="17">
    <source>
        <dbReference type="PDB" id="4RT4"/>
    </source>
</evidence>
<evidence type="ECO:0007744" key="18">
    <source>
        <dbReference type="PDB" id="6BX3"/>
    </source>
</evidence>
<evidence type="ECO:0007744" key="19">
    <source>
        <dbReference type="PDB" id="6VEN"/>
    </source>
</evidence>
<evidence type="ECO:0007744" key="20">
    <source>
    </source>
</evidence>
<evidence type="ECO:0007829" key="21">
    <source>
        <dbReference type="PDB" id="4RT4"/>
    </source>
</evidence>
<evidence type="ECO:0007829" key="22">
    <source>
        <dbReference type="PDB" id="6VEN"/>
    </source>
</evidence>
<protein>
    <recommendedName>
        <fullName evidence="14">COMPASS component BRE2</fullName>
    </recommendedName>
    <alternativeName>
        <fullName evidence="12">Brefeldin-A sensitivity protein 2</fullName>
    </alternativeName>
    <alternativeName>
        <fullName evidence="13">COMPASS protein 60</fullName>
    </alternativeName>
    <alternativeName>
        <fullName evidence="14">Complex proteins associated with SET1 protein BRE2</fullName>
    </alternativeName>
    <alternativeName>
        <fullName evidence="14">Set1C component BRE2</fullName>
    </alternativeName>
</protein>
<proteinExistence type="evidence at protein level"/>
<reference key="1">
    <citation type="submission" date="1995-08" db="EMBL/GenBank/DDBJ databases">
        <title>A 7.8kb fragment from chromosome XII of Saccharomyces cerevisiae does not harbour PKC2.</title>
        <authorList>
            <person name="Saville S.P."/>
            <person name="Atkinson S."/>
            <person name="Jamieson L."/>
            <person name="Pocklington M.J."/>
            <person name="Orr E."/>
        </authorList>
    </citation>
    <scope>NUCLEOTIDE SEQUENCE [GENOMIC DNA]</scope>
    <source>
        <strain>ATCC 204508 / S288c</strain>
    </source>
</reference>
<reference key="2">
    <citation type="journal article" date="1997" name="Nature">
        <title>The nucleotide sequence of Saccharomyces cerevisiae chromosome XII.</title>
        <authorList>
            <person name="Johnston M."/>
            <person name="Hillier L.W."/>
            <person name="Riles L."/>
            <person name="Albermann K."/>
            <person name="Andre B."/>
            <person name="Ansorge W."/>
            <person name="Benes V."/>
            <person name="Brueckner M."/>
            <person name="Delius H."/>
            <person name="Dubois E."/>
            <person name="Duesterhoeft A."/>
            <person name="Entian K.-D."/>
            <person name="Floeth M."/>
            <person name="Goffeau A."/>
            <person name="Hebling U."/>
            <person name="Heumann K."/>
            <person name="Heuss-Neitzel D."/>
            <person name="Hilbert H."/>
            <person name="Hilger F."/>
            <person name="Kleine K."/>
            <person name="Koetter P."/>
            <person name="Louis E.J."/>
            <person name="Messenguy F."/>
            <person name="Mewes H.-W."/>
            <person name="Miosga T."/>
            <person name="Moestl D."/>
            <person name="Mueller-Auer S."/>
            <person name="Nentwich U."/>
            <person name="Obermaier B."/>
            <person name="Piravandi E."/>
            <person name="Pohl T.M."/>
            <person name="Portetelle D."/>
            <person name="Purnelle B."/>
            <person name="Rechmann S."/>
            <person name="Rieger M."/>
            <person name="Rinke M."/>
            <person name="Rose M."/>
            <person name="Scharfe M."/>
            <person name="Scherens B."/>
            <person name="Scholler P."/>
            <person name="Schwager C."/>
            <person name="Schwarz S."/>
            <person name="Underwood A.P."/>
            <person name="Urrestarazu L.A."/>
            <person name="Vandenbol M."/>
            <person name="Verhasselt P."/>
            <person name="Vierendeels F."/>
            <person name="Voet M."/>
            <person name="Volckaert G."/>
            <person name="Voss H."/>
            <person name="Wambutt R."/>
            <person name="Wedler E."/>
            <person name="Wedler H."/>
            <person name="Zimmermann F.K."/>
            <person name="Zollner A."/>
            <person name="Hani J."/>
            <person name="Hoheisel J.D."/>
        </authorList>
    </citation>
    <scope>NUCLEOTIDE SEQUENCE [LARGE SCALE GENOMIC DNA]</scope>
    <source>
        <strain>ATCC 204508 / S288c</strain>
    </source>
</reference>
<reference key="3">
    <citation type="journal article" date="2014" name="G3 (Bethesda)">
        <title>The reference genome sequence of Saccharomyces cerevisiae: Then and now.</title>
        <authorList>
            <person name="Engel S.R."/>
            <person name="Dietrich F.S."/>
            <person name="Fisk D.G."/>
            <person name="Binkley G."/>
            <person name="Balakrishnan R."/>
            <person name="Costanzo M.C."/>
            <person name="Dwight S.S."/>
            <person name="Hitz B.C."/>
            <person name="Karra K."/>
            <person name="Nash R.S."/>
            <person name="Weng S."/>
            <person name="Wong E.D."/>
            <person name="Lloyd P."/>
            <person name="Skrzypek M.S."/>
            <person name="Miyasato S.R."/>
            <person name="Simison M."/>
            <person name="Cherry J.M."/>
        </authorList>
    </citation>
    <scope>GENOME REANNOTATION</scope>
    <source>
        <strain>ATCC 204508 / S288c</strain>
    </source>
</reference>
<reference key="4">
    <citation type="journal article" date="1994" name="Curr. Biol.">
        <title>Evidence against the existence of the purported Saccharomyces cerevisiae PKC2 gene.</title>
        <authorList>
            <person name="Levin D.E."/>
            <person name="Stevenson W.D."/>
            <person name="Watanabe M."/>
        </authorList>
    </citation>
    <scope>NUCLEOTIDE SEQUENCE [GENOMIC DNA] OF 1-472</scope>
    <source>
        <strain>ATCC 204508 / S288c</strain>
    </source>
</reference>
<reference key="5">
    <citation type="journal article" date="2001" name="EMBO J.">
        <title>The Saccharomyces cerevisiae Set1 complex includes an Ash2 homologue and methylates histone 3 lysine 4.</title>
        <authorList>
            <person name="Roguev A."/>
            <person name="Schaft D."/>
            <person name="Shevchenko A."/>
            <person name="Pijnappel W.W.M.P."/>
            <person name="Wilm M."/>
            <person name="Aasland R."/>
            <person name="Stewart A.F."/>
        </authorList>
    </citation>
    <scope>FUNCTION</scope>
    <scope>SUBUNIT</scope>
</reference>
<reference key="6">
    <citation type="journal article" date="2001" name="Proc. Natl. Acad. Sci. U.S.A.">
        <title>COMPASS: a complex of proteins associated with a trithorax-related SET domain protein.</title>
        <authorList>
            <person name="Miller T."/>
            <person name="Krogan N.J."/>
            <person name="Dover J."/>
            <person name="Erdjument-Bromage H."/>
            <person name="Tempst P."/>
            <person name="Johnston M."/>
            <person name="Greenblatt J.F."/>
            <person name="Shilatifard A."/>
        </authorList>
    </citation>
    <scope>SUBUNIT</scope>
</reference>
<reference key="7">
    <citation type="journal article" date="2001" name="Yeast">
        <title>Identification of yeast deletion strains that are hypersensitive to brefeldin A or monensin, two drugs that affect intracellular transport.</title>
        <authorList>
            <person name="Muren E."/>
            <person name="Oeyen M."/>
            <person name="Barmark G."/>
            <person name="Ronne H."/>
        </authorList>
    </citation>
    <scope>IDENTIFICATION</scope>
    <scope>DISRUPTION PHENOTYPE</scope>
</reference>
<reference key="8">
    <citation type="journal article" date="2002" name="J. Biol. Chem.">
        <title>COMPASS, a histone H3 (Lysine 4) methyltransferase required for telomeric silencing of gene expression.</title>
        <authorList>
            <person name="Krogan N.J."/>
            <person name="Dover J."/>
            <person name="Khorrami S."/>
            <person name="Greenblatt J.F."/>
            <person name="Schneider J."/>
            <person name="Johnston M."/>
            <person name="Shilatifard A."/>
        </authorList>
    </citation>
    <scope>FUNCTION</scope>
</reference>
<reference key="9">
    <citation type="journal article" date="2003" name="Nature">
        <title>Global analysis of protein expression in yeast.</title>
        <authorList>
            <person name="Ghaemmaghami S."/>
            <person name="Huh W.-K."/>
            <person name="Bower K."/>
            <person name="Howson R.W."/>
            <person name="Belle A."/>
            <person name="Dephoure N."/>
            <person name="O'Shea E.K."/>
            <person name="Weissman J.S."/>
        </authorList>
    </citation>
    <scope>LEVEL OF PROTEIN EXPRESSION [LARGE SCALE ANALYSIS]</scope>
</reference>
<reference key="10">
    <citation type="journal article" date="2008" name="Mol. Cell. Proteomics">
        <title>A multidimensional chromatography technology for in-depth phosphoproteome analysis.</title>
        <authorList>
            <person name="Albuquerque C.P."/>
            <person name="Smolka M.B."/>
            <person name="Payne S.H."/>
            <person name="Bafna V."/>
            <person name="Eng J."/>
            <person name="Zhou H."/>
        </authorList>
    </citation>
    <scope>PHOSPHORYLATION [LARGE SCALE ANALYSIS] AT SER-227</scope>
    <scope>IDENTIFICATION BY MASS SPECTROMETRY [LARGE SCALE ANALYSIS]</scope>
</reference>
<reference key="11">
    <citation type="journal article" date="2017" name="Cell Discov.">
        <title>Binding to RNA regulates Set1 function.</title>
        <authorList>
            <person name="Luciano P."/>
            <person name="Jeon J."/>
            <person name="El-Kaoutari A."/>
            <person name="Challal D."/>
            <person name="Bonnet A."/>
            <person name="Barucco M."/>
            <person name="Candelli T."/>
            <person name="Jourquin F."/>
            <person name="Lesage P."/>
            <person name="Kim J."/>
            <person name="Libri D."/>
            <person name="Geli V."/>
        </authorList>
    </citation>
    <scope>IDENTIFICATION IN THE SET1C/COMPASS COMPLEX</scope>
</reference>
<reference evidence="17" key="12">
    <citation type="journal article" date="2015" name="Protein Cell">
        <title>Structural implications of Dpy30 oligomerization for MLL/SET1 COMPASS H3K4 trimethylation.</title>
        <authorList>
            <person name="Zhang H."/>
            <person name="Li M."/>
            <person name="Gao Y."/>
            <person name="Jia C."/>
            <person name="Pan X."/>
            <person name="Cao P."/>
            <person name="Zhao X."/>
            <person name="Zhang J."/>
            <person name="Chang W."/>
        </authorList>
    </citation>
    <scope>X-RAY CRYSTALLOGRAPHY (2.00 ANGSTROMS) OF 476-505</scope>
    <scope>INTERACTION WITH SDC1</scope>
</reference>
<reference evidence="18" key="13">
    <citation type="journal article" date="2018" name="Cell">
        <title>Structure and conformational dynamics of a COMPASS histone H3K4 methyltransferase complex.</title>
        <authorList>
            <person name="Qu Q."/>
            <person name="Takahashi Y.H."/>
            <person name="Yang Y."/>
            <person name="Hu H."/>
            <person name="Zhang Y."/>
            <person name="Brunzelle J.S."/>
            <person name="Couture J.F."/>
            <person name="Shilatifard A."/>
            <person name="Skiniotis G."/>
        </authorList>
    </citation>
    <scope>STRUCTURE BY ELECTRON MICROSCOPY (4.30 ANGSTROMS) OF 87-503 WITHIN THE CORE COMPASS COMPLEX</scope>
    <scope>SUBUNIT</scope>
</reference>
<reference evidence="19" key="14">
    <citation type="journal article" date="2020" name="Elife">
        <title>Structural basis for COMPASS recognition of an H2B-ubiquitinated nucleosome.</title>
        <authorList>
            <person name="Worden E.J."/>
            <person name="Zhang X."/>
            <person name="Wolberger C."/>
        </authorList>
    </citation>
    <scope>STRUCTURE BY ELECTRON MICROSCOPY (3.37 ANGSTROMS) WITHIN THE CORE COMPASS H2B-UBIQUITIN NUCLEOSOME COMPLEX</scope>
    <scope>DNA-BINDING</scope>
    <scope>FUNCTION</scope>
</reference>
<gene>
    <name evidence="12" type="primary">BRE2</name>
    <name evidence="13" type="synonym">CPS60</name>
    <name type="ordered locus">YLR015W</name>
</gene>
<comment type="function">
    <text evidence="5 6 11">Component of the Set1C/COMPASS complex that specifically mono-, di- and trimethylates histone H3 to form H3K4me1/2/3, which subsequently plays a role in telomere length maintenance and transcription elongation regulation (PubMed:11742990, PubMed:11805083). COMPASS recognizes ubiquitinated H2B on one face of the nucleosome which stimulates the methylation of H3 on the opposing face (PubMed:31922488).</text>
</comment>
<comment type="subunit">
    <text evidence="4 5 8 9 10 11">Component of the Set1C/COMPASS complex which consists of SET1(2), BRE2(2), SPP1(2), SDC1(1), SHG1(1), SWD1(1), SWD2(1), and SWD3(1) (PubMed:11687631, PubMed:11742990, PubMed:29071121, PubMed:30100186, PubMed:31922488). Interacts directly with SDC1 (PubMed:25542209).</text>
</comment>
<comment type="interaction">
    <interactant intactId="EBI-27115">
        <id>P43132</id>
    </interactant>
    <interactant intactId="EBI-38307">
        <id>Q03323</id>
        <label>SDC1</label>
    </interactant>
    <organismsDiffer>false</organismsDiffer>
    <experiments>8</experiments>
</comment>
<comment type="interaction">
    <interactant intactId="EBI-27115">
        <id>P43132</id>
    </interactant>
    <interactant intactId="EBI-16977">
        <id>P38827</id>
        <label>SET1</label>
    </interactant>
    <organismsDiffer>false</organismsDiffer>
    <experiments>8</experiments>
</comment>
<comment type="subcellular location">
    <subcellularLocation>
        <location evidence="16">Nucleus</location>
    </subcellularLocation>
    <subcellularLocation>
        <location evidence="16">Chromosome</location>
        <location evidence="16">Telomere</location>
    </subcellularLocation>
</comment>
<comment type="disruption phenotype">
    <text evidence="3">Leads to hypersensitivity to brefeldin A.</text>
</comment>
<comment type="miscellaneous">
    <text evidence="7">Present with 1310 molecules/cell in log phase SD medium.</text>
</comment>
<comment type="similarity">
    <text evidence="16">Belongs to the cclA family.</text>
</comment>
<dbReference type="EMBL" id="X90564">
    <property type="protein sequence ID" value="CAA62158.1"/>
    <property type="molecule type" value="Genomic_DNA"/>
</dbReference>
<dbReference type="EMBL" id="Z73187">
    <property type="protein sequence ID" value="CAA97537.1"/>
    <property type="molecule type" value="Genomic_DNA"/>
</dbReference>
<dbReference type="EMBL" id="L34405">
    <property type="protein sequence ID" value="AAA34835.1"/>
    <property type="molecule type" value="Genomic_DNA"/>
</dbReference>
<dbReference type="EMBL" id="BK006945">
    <property type="protein sequence ID" value="DAA09333.1"/>
    <property type="molecule type" value="Genomic_DNA"/>
</dbReference>
<dbReference type="PIR" id="S64837">
    <property type="entry name" value="S64837"/>
</dbReference>
<dbReference type="RefSeq" id="NP_013115.1">
    <property type="nucleotide sequence ID" value="NM_001181902.1"/>
</dbReference>
<dbReference type="PDB" id="4RT4">
    <property type="method" value="X-ray"/>
    <property type="resolution" value="2.00 A"/>
    <property type="chains" value="E=476-505"/>
</dbReference>
<dbReference type="PDB" id="6BX3">
    <property type="method" value="EM"/>
    <property type="resolution" value="4.30 A"/>
    <property type="chains" value="K=87-503"/>
</dbReference>
<dbReference type="PDB" id="6VEN">
    <property type="method" value="EM"/>
    <property type="resolution" value="3.37 A"/>
    <property type="chains" value="O=1-505"/>
</dbReference>
<dbReference type="PDBsum" id="4RT4"/>
<dbReference type="PDBsum" id="6BX3"/>
<dbReference type="PDBsum" id="6VEN"/>
<dbReference type="EMDB" id="EMD-21157"/>
<dbReference type="EMDB" id="EMD-7303"/>
<dbReference type="SMR" id="P43132"/>
<dbReference type="BioGRID" id="31289">
    <property type="interactions" value="492"/>
</dbReference>
<dbReference type="ComplexPortal" id="CPX-1039">
    <property type="entry name" value="COMPASS complex"/>
</dbReference>
<dbReference type="DIP" id="DIP-1935N"/>
<dbReference type="FunCoup" id="P43132">
    <property type="interactions" value="148"/>
</dbReference>
<dbReference type="IntAct" id="P43132">
    <property type="interactions" value="11"/>
</dbReference>
<dbReference type="MINT" id="P43132"/>
<dbReference type="STRING" id="4932.YLR015W"/>
<dbReference type="iPTMnet" id="P43132"/>
<dbReference type="PaxDb" id="4932-YLR015W"/>
<dbReference type="PeptideAtlas" id="P43132"/>
<dbReference type="EnsemblFungi" id="YLR015W_mRNA">
    <property type="protein sequence ID" value="YLR015W"/>
    <property type="gene ID" value="YLR015W"/>
</dbReference>
<dbReference type="GeneID" id="850702"/>
<dbReference type="KEGG" id="sce:YLR015W"/>
<dbReference type="AGR" id="SGD:S000004005"/>
<dbReference type="SGD" id="S000004005">
    <property type="gene designation" value="BRE2"/>
</dbReference>
<dbReference type="VEuPathDB" id="FungiDB:YLR015W"/>
<dbReference type="eggNOG" id="KOG2626">
    <property type="taxonomic scope" value="Eukaryota"/>
</dbReference>
<dbReference type="GeneTree" id="ENSGT00390000010474"/>
<dbReference type="HOGENOM" id="CLU_014420_4_1_1"/>
<dbReference type="InParanoid" id="P43132"/>
<dbReference type="OMA" id="GFRYTYA"/>
<dbReference type="OrthoDB" id="10266026at2759"/>
<dbReference type="BioCyc" id="YEAST:G3O-32176-MONOMER"/>
<dbReference type="Reactome" id="R-SCE-3214841">
    <property type="pathway name" value="PKMTs methylate histone lysines"/>
</dbReference>
<dbReference type="Reactome" id="R-SCE-9772755">
    <property type="pathway name" value="Formation of WDR5-containing histone-modifying complexes"/>
</dbReference>
<dbReference type="BioGRID-ORCS" id="850702">
    <property type="hits" value="0 hits in 10 CRISPR screens"/>
</dbReference>
<dbReference type="EvolutionaryTrace" id="P43132"/>
<dbReference type="PRO" id="PR:P43132"/>
<dbReference type="Proteomes" id="UP000002311">
    <property type="component" value="Chromosome XII"/>
</dbReference>
<dbReference type="RNAct" id="P43132">
    <property type="molecule type" value="protein"/>
</dbReference>
<dbReference type="GO" id="GO:0000781">
    <property type="term" value="C:chromosome, telomeric region"/>
    <property type="evidence" value="ECO:0007669"/>
    <property type="project" value="UniProtKB-SubCell"/>
</dbReference>
<dbReference type="GO" id="GO:0005634">
    <property type="term" value="C:nucleus"/>
    <property type="evidence" value="ECO:0000303"/>
    <property type="project" value="ComplexPortal"/>
</dbReference>
<dbReference type="GO" id="GO:0048188">
    <property type="term" value="C:Set1C/COMPASS complex"/>
    <property type="evidence" value="ECO:0000314"/>
    <property type="project" value="UniProtKB"/>
</dbReference>
<dbReference type="GO" id="GO:0000976">
    <property type="term" value="F:transcription cis-regulatory region binding"/>
    <property type="evidence" value="ECO:0000318"/>
    <property type="project" value="GO_Central"/>
</dbReference>
<dbReference type="GO" id="GO:0031509">
    <property type="term" value="P:subtelomeric heterochromatin formation"/>
    <property type="evidence" value="ECO:0000315"/>
    <property type="project" value="SGD"/>
</dbReference>
<dbReference type="GO" id="GO:0000723">
    <property type="term" value="P:telomere maintenance"/>
    <property type="evidence" value="ECO:0000315"/>
    <property type="project" value="SGD"/>
</dbReference>
<dbReference type="CDD" id="cd12872">
    <property type="entry name" value="SPRY_Ash2"/>
    <property type="match status" value="1"/>
</dbReference>
<dbReference type="Gene3D" id="2.60.120.920">
    <property type="match status" value="1"/>
</dbReference>
<dbReference type="InterPro" id="IPR037353">
    <property type="entry name" value="ASH2"/>
</dbReference>
<dbReference type="InterPro" id="IPR043136">
    <property type="entry name" value="B30.2/SPRY_sf"/>
</dbReference>
<dbReference type="InterPro" id="IPR013320">
    <property type="entry name" value="ConA-like_dom_sf"/>
</dbReference>
<dbReference type="InterPro" id="IPR003877">
    <property type="entry name" value="SPRY_dom"/>
</dbReference>
<dbReference type="PANTHER" id="PTHR10598">
    <property type="entry name" value="SET1/ASH2 HISTONE METHYLTRANSFERASE COMPLEX SUBUNIT ASH2"/>
    <property type="match status" value="1"/>
</dbReference>
<dbReference type="PANTHER" id="PTHR10598:SF0">
    <property type="entry name" value="SET1_ASH2 HISTONE METHYLTRANSFERASE COMPLEX SUBUNIT ASH2"/>
    <property type="match status" value="1"/>
</dbReference>
<dbReference type="SMART" id="SM00449">
    <property type="entry name" value="SPRY"/>
    <property type="match status" value="1"/>
</dbReference>
<dbReference type="SUPFAM" id="SSF49899">
    <property type="entry name" value="Concanavalin A-like lectins/glucanases"/>
    <property type="match status" value="1"/>
</dbReference>
<sequence>MKLGIIPYQEGTDIVYKNALQGQQEGKRPNLPQMEATHQIKSSVQGTSYEFVRTEDIPLNRRHFVYRPCSANPFFTILGYGCTEYPFDHSGMSVMDRSEGLSISRDGNDLVSVPDQYGWRTARSDVCIKEGMTYWEVEVIRGGNKKFADGVNNKENADDSVDEVQSGIYEKMHKQVNDTPHLRFGVCRREASLEAPVGFDVYGYGIRDISLESIHEGKLNCVLENGSPLKEGDKIGFLLSLPSIHTQIKQAKEFTKRRIFALNSHMDTMNEPWREDAENGPSRKKLKQETTNKEFQRALLEDIEYNDVVRDQIAIRYKNQLFFEATDYVKTTKPEYYSSDKRERQDYYQLEDSYLAIFQNGKYLGKAFENLKPLLPPFSELQYNEKFYLGYWQHGEARDESNDKNTTSAKKKKQQQKKKKGLILRNKYVNNNKLGYYPTISCFNGGTARIISEEDKLEYLDQIRSAYCVDGNSKVNTLDTLYKEQIAEDIVWDIIDELEQIALQQ</sequence>
<feature type="chain" id="PRO_0000064987" description="COMPASS component BRE2">
    <location>
        <begin position="1"/>
        <end position="505"/>
    </location>
</feature>
<feature type="domain" description="B30.2/SPRY" evidence="1">
    <location>
        <begin position="70"/>
        <end position="295"/>
    </location>
</feature>
<feature type="region of interest" description="Disordered" evidence="2">
    <location>
        <begin position="271"/>
        <end position="290"/>
    </location>
</feature>
<feature type="region of interest" description="Disordered" evidence="2">
    <location>
        <begin position="398"/>
        <end position="420"/>
    </location>
</feature>
<feature type="compositionally biased region" description="Basic residues" evidence="2">
    <location>
        <begin position="409"/>
        <end position="420"/>
    </location>
</feature>
<feature type="binding site" evidence="15 19">
    <location>
        <position position="318"/>
    </location>
    <ligand>
        <name>DNA</name>
        <dbReference type="ChEBI" id="CHEBI:16991"/>
    </ligand>
</feature>
<feature type="modified residue" description="Phosphoserine" evidence="20">
    <location>
        <position position="227"/>
    </location>
</feature>
<feature type="strand" evidence="22">
    <location>
        <begin position="64"/>
        <end position="71"/>
    </location>
</feature>
<feature type="strand" evidence="22">
    <location>
        <begin position="76"/>
        <end position="78"/>
    </location>
</feature>
<feature type="strand" evidence="22">
    <location>
        <begin position="80"/>
        <end position="82"/>
    </location>
</feature>
<feature type="strand" evidence="22">
    <location>
        <begin position="86"/>
        <end position="89"/>
    </location>
</feature>
<feature type="strand" evidence="22">
    <location>
        <begin position="92"/>
        <end position="97"/>
    </location>
</feature>
<feature type="strand" evidence="22">
    <location>
        <begin position="120"/>
        <end position="126"/>
    </location>
</feature>
<feature type="strand" evidence="22">
    <location>
        <begin position="130"/>
        <end position="138"/>
    </location>
</feature>
<feature type="strand" evidence="22">
    <location>
        <begin position="182"/>
        <end position="187"/>
    </location>
</feature>
<feature type="strand" evidence="22">
    <location>
        <begin position="199"/>
        <end position="209"/>
    </location>
</feature>
<feature type="strand" evidence="22">
    <location>
        <begin position="213"/>
        <end position="215"/>
    </location>
</feature>
<feature type="strand" evidence="22">
    <location>
        <begin position="218"/>
        <end position="220"/>
    </location>
</feature>
<feature type="strand" evidence="22">
    <location>
        <begin position="234"/>
        <end position="241"/>
    </location>
</feature>
<feature type="helix" evidence="22">
    <location>
        <begin position="244"/>
        <end position="260"/>
    </location>
</feature>
<feature type="helix" evidence="22">
    <location>
        <begin position="293"/>
        <end position="298"/>
    </location>
</feature>
<feature type="strand" evidence="22">
    <location>
        <begin position="313"/>
        <end position="317"/>
    </location>
</feature>
<feature type="strand" evidence="22">
    <location>
        <begin position="320"/>
        <end position="326"/>
    </location>
</feature>
<feature type="strand" evidence="22">
    <location>
        <begin position="354"/>
        <end position="359"/>
    </location>
</feature>
<feature type="strand" evidence="22">
    <location>
        <begin position="362"/>
        <end position="370"/>
    </location>
</feature>
<feature type="helix" evidence="22">
    <location>
        <begin position="385"/>
        <end position="391"/>
    </location>
</feature>
<feature type="strand" evidence="22">
    <location>
        <begin position="435"/>
        <end position="442"/>
    </location>
</feature>
<feature type="strand" evidence="22">
    <location>
        <begin position="448"/>
        <end position="451"/>
    </location>
</feature>
<feature type="helix" evidence="22">
    <location>
        <begin position="454"/>
        <end position="456"/>
    </location>
</feature>
<feature type="strand" evidence="22">
    <location>
        <begin position="458"/>
        <end position="461"/>
    </location>
</feature>
<feature type="helix" evidence="21">
    <location>
        <begin position="483"/>
        <end position="500"/>
    </location>
</feature>
<name>BRE2_YEAST</name>
<keyword id="KW-0002">3D-structure</keyword>
<keyword id="KW-0158">Chromosome</keyword>
<keyword id="KW-0539">Nucleus</keyword>
<keyword id="KW-0597">Phosphoprotein</keyword>
<keyword id="KW-1185">Reference proteome</keyword>
<keyword id="KW-0779">Telomere</keyword>